<comment type="function">
    <text evidence="1">Component of the Arp2/3 complex, a multiprotein complex that mediates actin polymerization upon stimulation by nucleation-promoting factor (NPF). The Arp2/3 complex mediates the formation of branched actin networks in the cytoplasm, providing the force for cell motility. In addition to its role in the cytoplasmic cytoskeleton, the Arp2/3 complex also promotes actin polymerization in the nucleus, thereby regulating gene transcription and repair of damaged DNA. The Arp2/3 complex promotes homologous recombination (HR) repair in response to DNA damage by promoting nuclear actin polymerization, leading to drive motility of double-strand breaks (DSBs).</text>
</comment>
<comment type="subunit">
    <text evidence="2 3">Component of the Arp2/3 complex composed of ACTR2/ARP2, ACTR3/ARP3, ARPC1B/p41-ARC, ARPC2/p34-ARC, ARPC3/p21-ARC, ARPC4/p20-ARC and ARPC5/p16-ARC.</text>
</comment>
<comment type="subcellular location">
    <subcellularLocation>
        <location evidence="1">Cytoplasm</location>
        <location evidence="1">Cytoskeleton</location>
    </subcellularLocation>
    <subcellularLocation>
        <location evidence="1">Nucleus</location>
    </subcellularLocation>
</comment>
<comment type="similarity">
    <text evidence="4">Belongs to the WD repeat ARPC1 family.</text>
</comment>
<proteinExistence type="evidence at protein level"/>
<sequence length="372" mass="40976">MAYHSFLVEPISCHAWNKDRTQIAICPNNHEVHIYEKSGNKWVQVHELKEHNGQVTGIDWAPDSNRIVTCGTDRNAYVWTLKGRTWKPTLVILRINRAARCVRWAPNEKKFAVGSGSRVISICYFEQENDWWVCKHIKKPIRSTVLSLDWHPNSVLLAAGSCDFKCRIFSAYIKEVEERPAPTPWGSKMPFGELMFESSSSCGWVHGVCFSANGSRVAWVSHDSTVCLADADKKMAVATLASETLPLLAVTFITESSLVAAGHDCFPVLFTYDSAAGKLSFGGRLDVPKQSSQRGLTARERFQNLDKKASSEGSAAAGAGLDSLHKNSVSQISVLSGGKAKCSQFCTTGMDGGMSIWDVRSLESALKDLKIV</sequence>
<feature type="chain" id="PRO_0000239701" description="Actin-related protein 2/3 complex subunit 1B">
    <location>
        <begin position="1"/>
        <end position="372"/>
    </location>
</feature>
<feature type="repeat" description="WD 1">
    <location>
        <begin position="6"/>
        <end position="45"/>
    </location>
</feature>
<feature type="repeat" description="WD 2">
    <location>
        <begin position="50"/>
        <end position="89"/>
    </location>
</feature>
<feature type="repeat" description="WD 3">
    <location>
        <begin position="94"/>
        <end position="135"/>
    </location>
</feature>
<feature type="repeat" description="WD 4">
    <location>
        <begin position="140"/>
        <end position="179"/>
    </location>
</feature>
<feature type="repeat" description="WD 5">
    <location>
        <begin position="242"/>
        <end position="280"/>
    </location>
</feature>
<feature type="repeat" description="WD 6">
    <location>
        <begin position="324"/>
        <end position="367"/>
    </location>
</feature>
<feature type="sequence conflict" description="In Ref. 1; AAX46742." evidence="4" ref="1">
    <original>R</original>
    <variation>H</variation>
    <location>
        <position position="66"/>
    </location>
</feature>
<feature type="strand" evidence="5">
    <location>
        <begin position="3"/>
        <end position="6"/>
    </location>
</feature>
<feature type="strand" evidence="5">
    <location>
        <begin position="14"/>
        <end position="16"/>
    </location>
</feature>
<feature type="strand" evidence="5">
    <location>
        <begin position="20"/>
        <end position="25"/>
    </location>
</feature>
<feature type="strand" evidence="5">
    <location>
        <begin position="28"/>
        <end position="38"/>
    </location>
</feature>
<feature type="strand" evidence="5">
    <location>
        <begin position="41"/>
        <end position="49"/>
    </location>
</feature>
<feature type="strand" evidence="5">
    <location>
        <begin position="55"/>
        <end position="61"/>
    </location>
</feature>
<feature type="turn" evidence="5">
    <location>
        <begin position="62"/>
        <end position="65"/>
    </location>
</feature>
<feature type="strand" evidence="5">
    <location>
        <begin position="66"/>
        <end position="71"/>
    </location>
</feature>
<feature type="strand" evidence="8">
    <location>
        <begin position="72"/>
        <end position="74"/>
    </location>
</feature>
<feature type="strand" evidence="5">
    <location>
        <begin position="76"/>
        <end position="82"/>
    </location>
</feature>
<feature type="strand" evidence="5">
    <location>
        <begin position="85"/>
        <end position="91"/>
    </location>
</feature>
<feature type="strand" evidence="5">
    <location>
        <begin position="99"/>
        <end position="104"/>
    </location>
</feature>
<feature type="strand" evidence="5">
    <location>
        <begin position="108"/>
        <end position="115"/>
    </location>
</feature>
<feature type="strand" evidence="5">
    <location>
        <begin position="118"/>
        <end position="126"/>
    </location>
</feature>
<feature type="turn" evidence="5">
    <location>
        <begin position="127"/>
        <end position="130"/>
    </location>
</feature>
<feature type="strand" evidence="5">
    <location>
        <begin position="131"/>
        <end position="137"/>
    </location>
</feature>
<feature type="strand" evidence="5">
    <location>
        <begin position="145"/>
        <end position="150"/>
    </location>
</feature>
<feature type="strand" evidence="5">
    <location>
        <begin position="154"/>
        <end position="161"/>
    </location>
</feature>
<feature type="strand" evidence="5">
    <location>
        <begin position="166"/>
        <end position="170"/>
    </location>
</feature>
<feature type="turn" evidence="5">
    <location>
        <begin position="174"/>
        <end position="176"/>
    </location>
</feature>
<feature type="strand" evidence="5">
    <location>
        <begin position="194"/>
        <end position="197"/>
    </location>
</feature>
<feature type="strand" evidence="7">
    <location>
        <begin position="201"/>
        <end position="203"/>
    </location>
</feature>
<feature type="strand" evidence="5">
    <location>
        <begin position="205"/>
        <end position="210"/>
    </location>
</feature>
<feature type="strand" evidence="5">
    <location>
        <begin position="212"/>
        <end position="221"/>
    </location>
</feature>
<feature type="turn" evidence="5">
    <location>
        <begin position="222"/>
        <end position="224"/>
    </location>
</feature>
<feature type="strand" evidence="5">
    <location>
        <begin position="225"/>
        <end position="230"/>
    </location>
</feature>
<feature type="helix" evidence="5">
    <location>
        <begin position="231"/>
        <end position="233"/>
    </location>
</feature>
<feature type="strand" evidence="5">
    <location>
        <begin position="237"/>
        <end position="241"/>
    </location>
</feature>
<feature type="strand" evidence="6">
    <location>
        <begin position="243"/>
        <end position="245"/>
    </location>
</feature>
<feature type="strand" evidence="5">
    <location>
        <begin position="247"/>
        <end position="254"/>
    </location>
</feature>
<feature type="strand" evidence="5">
    <location>
        <begin position="257"/>
        <end position="262"/>
    </location>
</feature>
<feature type="strand" evidence="5">
    <location>
        <begin position="268"/>
        <end position="273"/>
    </location>
</feature>
<feature type="turn" evidence="5">
    <location>
        <begin position="274"/>
        <end position="277"/>
    </location>
</feature>
<feature type="strand" evidence="5">
    <location>
        <begin position="278"/>
        <end position="281"/>
    </location>
</feature>
<feature type="helix" evidence="5">
    <location>
        <begin position="298"/>
        <end position="304"/>
    </location>
</feature>
<feature type="strand" evidence="5">
    <location>
        <begin position="322"/>
        <end position="327"/>
    </location>
</feature>
<feature type="strand" evidence="5">
    <location>
        <begin position="329"/>
        <end position="337"/>
    </location>
</feature>
<feature type="turn" evidence="5">
    <location>
        <begin position="338"/>
        <end position="340"/>
    </location>
</feature>
<feature type="strand" evidence="5">
    <location>
        <begin position="343"/>
        <end position="349"/>
    </location>
</feature>
<feature type="strand" evidence="5">
    <location>
        <begin position="352"/>
        <end position="358"/>
    </location>
</feature>
<feature type="helix" evidence="5">
    <location>
        <begin position="359"/>
        <end position="365"/>
    </location>
</feature>
<feature type="strand" evidence="9">
    <location>
        <begin position="366"/>
        <end position="368"/>
    </location>
</feature>
<protein>
    <recommendedName>
        <fullName>Actin-related protein 2/3 complex subunit 1B</fullName>
    </recommendedName>
    <alternativeName>
        <fullName>Arp2/3 complex 41 kDa subunit</fullName>
    </alternativeName>
    <alternativeName>
        <fullName>p41-ARC</fullName>
    </alternativeName>
</protein>
<accession>Q58CQ2</accession>
<accession>Q0V8Q8</accession>
<accession>Q58DS1</accession>
<evidence type="ECO:0000250" key="1">
    <source>
        <dbReference type="UniProtKB" id="O15143"/>
    </source>
</evidence>
<evidence type="ECO:0000269" key="2">
    <source>
    </source>
</evidence>
<evidence type="ECO:0000269" key="3">
    <source>
    </source>
</evidence>
<evidence type="ECO:0000305" key="4"/>
<evidence type="ECO:0007829" key="5">
    <source>
        <dbReference type="PDB" id="1K8K"/>
    </source>
</evidence>
<evidence type="ECO:0007829" key="6">
    <source>
        <dbReference type="PDB" id="2P9I"/>
    </source>
</evidence>
<evidence type="ECO:0007829" key="7">
    <source>
        <dbReference type="PDB" id="2P9K"/>
    </source>
</evidence>
<evidence type="ECO:0007829" key="8">
    <source>
        <dbReference type="PDB" id="3UKU"/>
    </source>
</evidence>
<evidence type="ECO:0007829" key="9">
    <source>
        <dbReference type="PDB" id="7JPN"/>
    </source>
</evidence>
<keyword id="KW-0002">3D-structure</keyword>
<keyword id="KW-0009">Actin-binding</keyword>
<keyword id="KW-0963">Cytoplasm</keyword>
<keyword id="KW-0206">Cytoskeleton</keyword>
<keyword id="KW-0539">Nucleus</keyword>
<keyword id="KW-1185">Reference proteome</keyword>
<keyword id="KW-0677">Repeat</keyword>
<keyword id="KW-0853">WD repeat</keyword>
<dbReference type="EMBL" id="BT021526">
    <property type="protein sequence ID" value="AAX46373.1"/>
    <property type="molecule type" value="mRNA"/>
</dbReference>
<dbReference type="EMBL" id="BT021895">
    <property type="protein sequence ID" value="AAX46742.1"/>
    <property type="molecule type" value="mRNA"/>
</dbReference>
<dbReference type="EMBL" id="BT026160">
    <property type="protein sequence ID" value="ABG66999.1"/>
    <property type="molecule type" value="mRNA"/>
</dbReference>
<dbReference type="EMBL" id="BC102942">
    <property type="protein sequence ID" value="AAI02943.1"/>
    <property type="molecule type" value="mRNA"/>
</dbReference>
<dbReference type="RefSeq" id="NP_001014844.1">
    <property type="nucleotide sequence ID" value="NM_001014844.3"/>
</dbReference>
<dbReference type="PDB" id="1K8K">
    <property type="method" value="X-ray"/>
    <property type="resolution" value="2.00 A"/>
    <property type="chains" value="C=1-372"/>
</dbReference>
<dbReference type="PDB" id="1TYQ">
    <property type="method" value="X-ray"/>
    <property type="resolution" value="2.55 A"/>
    <property type="chains" value="C=1-372"/>
</dbReference>
<dbReference type="PDB" id="1U2V">
    <property type="method" value="X-ray"/>
    <property type="resolution" value="2.55 A"/>
    <property type="chains" value="C=1-372"/>
</dbReference>
<dbReference type="PDB" id="2P9I">
    <property type="method" value="X-ray"/>
    <property type="resolution" value="2.46 A"/>
    <property type="chains" value="C=1-372"/>
</dbReference>
<dbReference type="PDB" id="2P9K">
    <property type="method" value="X-ray"/>
    <property type="resolution" value="2.59 A"/>
    <property type="chains" value="C=1-372"/>
</dbReference>
<dbReference type="PDB" id="2P9L">
    <property type="method" value="X-ray"/>
    <property type="resolution" value="2.65 A"/>
    <property type="chains" value="C=1-372"/>
</dbReference>
<dbReference type="PDB" id="2P9N">
    <property type="method" value="X-ray"/>
    <property type="resolution" value="2.85 A"/>
    <property type="chains" value="C=1-372"/>
</dbReference>
<dbReference type="PDB" id="2P9P">
    <property type="method" value="X-ray"/>
    <property type="resolution" value="2.90 A"/>
    <property type="chains" value="C=1-372"/>
</dbReference>
<dbReference type="PDB" id="2P9S">
    <property type="method" value="X-ray"/>
    <property type="resolution" value="2.68 A"/>
    <property type="chains" value="C=1-372"/>
</dbReference>
<dbReference type="PDB" id="2P9U">
    <property type="method" value="X-ray"/>
    <property type="resolution" value="2.75 A"/>
    <property type="chains" value="C=1-372"/>
</dbReference>
<dbReference type="PDB" id="3DXK">
    <property type="method" value="X-ray"/>
    <property type="resolution" value="2.70 A"/>
    <property type="chains" value="C=1-372"/>
</dbReference>
<dbReference type="PDB" id="3DXM">
    <property type="method" value="X-ray"/>
    <property type="resolution" value="2.85 A"/>
    <property type="chains" value="C=1-372"/>
</dbReference>
<dbReference type="PDB" id="3RSE">
    <property type="method" value="X-ray"/>
    <property type="resolution" value="2.65 A"/>
    <property type="chains" value="C=1-372"/>
</dbReference>
<dbReference type="PDB" id="3UKR">
    <property type="method" value="X-ray"/>
    <property type="resolution" value="2.48 A"/>
    <property type="chains" value="C=1-372"/>
</dbReference>
<dbReference type="PDB" id="3UKU">
    <property type="method" value="X-ray"/>
    <property type="resolution" value="2.75 A"/>
    <property type="chains" value="C=1-372"/>
</dbReference>
<dbReference type="PDB" id="3ULE">
    <property type="method" value="X-ray"/>
    <property type="resolution" value="2.50 A"/>
    <property type="chains" value="C=1-372"/>
</dbReference>
<dbReference type="PDB" id="4JD2">
    <property type="method" value="X-ray"/>
    <property type="resolution" value="3.08 A"/>
    <property type="chains" value="C=1-372"/>
</dbReference>
<dbReference type="PDB" id="4XEI">
    <property type="method" value="X-ray"/>
    <property type="resolution" value="3.87 A"/>
    <property type="chains" value="C=1-372"/>
</dbReference>
<dbReference type="PDB" id="4XF2">
    <property type="method" value="X-ray"/>
    <property type="resolution" value="5.00 A"/>
    <property type="chains" value="C/V=1-372"/>
</dbReference>
<dbReference type="PDB" id="6DEC">
    <property type="method" value="X-ray"/>
    <property type="resolution" value="4.60 A"/>
    <property type="chains" value="C/J=1-372"/>
</dbReference>
<dbReference type="PDB" id="7JPN">
    <property type="method" value="EM"/>
    <property type="resolution" value="3.24 A"/>
    <property type="chains" value="C=1-372"/>
</dbReference>
<dbReference type="PDB" id="7TPT">
    <property type="method" value="EM"/>
    <property type="resolution" value="3.90 A"/>
    <property type="chains" value="C=1-372"/>
</dbReference>
<dbReference type="PDBsum" id="1K8K"/>
<dbReference type="PDBsum" id="1TYQ"/>
<dbReference type="PDBsum" id="1U2V"/>
<dbReference type="PDBsum" id="2P9I"/>
<dbReference type="PDBsum" id="2P9K"/>
<dbReference type="PDBsum" id="2P9L"/>
<dbReference type="PDBsum" id="2P9N"/>
<dbReference type="PDBsum" id="2P9P"/>
<dbReference type="PDBsum" id="2P9S"/>
<dbReference type="PDBsum" id="2P9U"/>
<dbReference type="PDBsum" id="3DXK"/>
<dbReference type="PDBsum" id="3DXM"/>
<dbReference type="PDBsum" id="3RSE"/>
<dbReference type="PDBsum" id="3UKR"/>
<dbReference type="PDBsum" id="3UKU"/>
<dbReference type="PDBsum" id="3ULE"/>
<dbReference type="PDBsum" id="4JD2"/>
<dbReference type="PDBsum" id="4XEI"/>
<dbReference type="PDBsum" id="4XF2"/>
<dbReference type="PDBsum" id="6DEC"/>
<dbReference type="PDBsum" id="7JPN"/>
<dbReference type="PDBsum" id="7TPT"/>
<dbReference type="EMDB" id="EMD-22416"/>
<dbReference type="EMDB" id="EMD-26063"/>
<dbReference type="SMR" id="Q58CQ2"/>
<dbReference type="DIP" id="DIP-29791N"/>
<dbReference type="FunCoup" id="Q58CQ2">
    <property type="interactions" value="2778"/>
</dbReference>
<dbReference type="IntAct" id="Q58CQ2">
    <property type="interactions" value="8"/>
</dbReference>
<dbReference type="STRING" id="9913.ENSBTAP00000056302"/>
<dbReference type="PaxDb" id="9913-ENSBTAP00000056302"/>
<dbReference type="PeptideAtlas" id="Q58CQ2"/>
<dbReference type="Ensembl" id="ENSBTAT00000116825.1">
    <property type="protein sequence ID" value="ENSBTAP00000091612.1"/>
    <property type="gene ID" value="ENSBTAG00000046248.3"/>
</dbReference>
<dbReference type="GeneID" id="326600"/>
<dbReference type="KEGG" id="bta:326600"/>
<dbReference type="CTD" id="10095"/>
<dbReference type="VEuPathDB" id="HostDB:ENSBTAG00000046248"/>
<dbReference type="VGNC" id="VGNC:26164">
    <property type="gene designation" value="ARPC1B"/>
</dbReference>
<dbReference type="eggNOG" id="KOG1523">
    <property type="taxonomic scope" value="Eukaryota"/>
</dbReference>
<dbReference type="GeneTree" id="ENSGT00950000183183"/>
<dbReference type="HOGENOM" id="CLU_034396_1_0_1"/>
<dbReference type="InParanoid" id="Q58CQ2"/>
<dbReference type="OMA" id="IWDVKVT"/>
<dbReference type="OrthoDB" id="406844at2759"/>
<dbReference type="TreeFam" id="TF315041"/>
<dbReference type="Reactome" id="R-BTA-2029482">
    <property type="pathway name" value="Regulation of actin dynamics for phagocytic cup formation"/>
</dbReference>
<dbReference type="Reactome" id="R-BTA-3928662">
    <property type="pathway name" value="EPHB-mediated forward signaling"/>
</dbReference>
<dbReference type="Reactome" id="R-BTA-5663213">
    <property type="pathway name" value="RHO GTPases Activate WASPs and WAVEs"/>
</dbReference>
<dbReference type="CD-CODE" id="D7FE2080">
    <property type="entry name" value="Nucleolus"/>
</dbReference>
<dbReference type="EvolutionaryTrace" id="Q58CQ2"/>
<dbReference type="Proteomes" id="UP000009136">
    <property type="component" value="Chromosome 25"/>
</dbReference>
<dbReference type="Bgee" id="ENSBTAG00000046248">
    <property type="expression patterns" value="Expressed in blood and 106 other cell types or tissues"/>
</dbReference>
<dbReference type="GO" id="GO:0005885">
    <property type="term" value="C:Arp2/3 protein complex"/>
    <property type="evidence" value="ECO:0000318"/>
    <property type="project" value="GO_Central"/>
</dbReference>
<dbReference type="GO" id="GO:0005829">
    <property type="term" value="C:cytosol"/>
    <property type="evidence" value="ECO:0000304"/>
    <property type="project" value="Reactome"/>
</dbReference>
<dbReference type="GO" id="GO:0005634">
    <property type="term" value="C:nucleus"/>
    <property type="evidence" value="ECO:0007669"/>
    <property type="project" value="UniProtKB-SubCell"/>
</dbReference>
<dbReference type="GO" id="GO:0051015">
    <property type="term" value="F:actin filament binding"/>
    <property type="evidence" value="ECO:0000318"/>
    <property type="project" value="GO_Central"/>
</dbReference>
<dbReference type="GO" id="GO:0034314">
    <property type="term" value="P:Arp2/3 complex-mediated actin nucleation"/>
    <property type="evidence" value="ECO:0000318"/>
    <property type="project" value="GO_Central"/>
</dbReference>
<dbReference type="FunFam" id="2.130.10.10:FF:000030">
    <property type="entry name" value="Actin-related protein 2/3 complex subunit"/>
    <property type="match status" value="1"/>
</dbReference>
<dbReference type="Gene3D" id="2.130.10.10">
    <property type="entry name" value="YVTN repeat-like/Quinoprotein amine dehydrogenase"/>
    <property type="match status" value="1"/>
</dbReference>
<dbReference type="InterPro" id="IPR017383">
    <property type="entry name" value="ARPC1"/>
</dbReference>
<dbReference type="InterPro" id="IPR015943">
    <property type="entry name" value="WD40/YVTN_repeat-like_dom_sf"/>
</dbReference>
<dbReference type="InterPro" id="IPR036322">
    <property type="entry name" value="WD40_repeat_dom_sf"/>
</dbReference>
<dbReference type="InterPro" id="IPR001680">
    <property type="entry name" value="WD40_rpt"/>
</dbReference>
<dbReference type="PANTHER" id="PTHR10709">
    <property type="entry name" value="ACTIN-RELATED PROTEIN 2/3 COMPLEX SUBUNIT 1"/>
    <property type="match status" value="1"/>
</dbReference>
<dbReference type="PANTHER" id="PTHR10709:SF10">
    <property type="entry name" value="ACTIN-RELATED PROTEIN 2_3 COMPLEX SUBUNIT 1B"/>
    <property type="match status" value="1"/>
</dbReference>
<dbReference type="Pfam" id="PF00400">
    <property type="entry name" value="WD40"/>
    <property type="match status" value="2"/>
</dbReference>
<dbReference type="PIRSF" id="PIRSF038093">
    <property type="entry name" value="ARP2/3_su1"/>
    <property type="match status" value="1"/>
</dbReference>
<dbReference type="SMART" id="SM00320">
    <property type="entry name" value="WD40"/>
    <property type="match status" value="5"/>
</dbReference>
<dbReference type="SUPFAM" id="SSF50978">
    <property type="entry name" value="WD40 repeat-like"/>
    <property type="match status" value="1"/>
</dbReference>
<dbReference type="PROSITE" id="PS50082">
    <property type="entry name" value="WD_REPEATS_2"/>
    <property type="match status" value="1"/>
</dbReference>
<dbReference type="PROSITE" id="PS50294">
    <property type="entry name" value="WD_REPEATS_REGION"/>
    <property type="match status" value="1"/>
</dbReference>
<gene>
    <name type="primary">ARPC1B</name>
</gene>
<reference key="1">
    <citation type="journal article" date="2005" name="BMC Genomics">
        <title>Characterization of 954 bovine full-CDS cDNA sequences.</title>
        <authorList>
            <person name="Harhay G.P."/>
            <person name="Sonstegard T.S."/>
            <person name="Keele J.W."/>
            <person name="Heaton M.P."/>
            <person name="Clawson M.L."/>
            <person name="Snelling W.M."/>
            <person name="Wiedmann R.T."/>
            <person name="Van Tassell C.P."/>
            <person name="Smith T.P.L."/>
        </authorList>
    </citation>
    <scope>NUCLEOTIDE SEQUENCE [LARGE SCALE MRNA]</scope>
</reference>
<reference key="2">
    <citation type="submission" date="2005-08" db="EMBL/GenBank/DDBJ databases">
        <authorList>
            <consortium name="NIH - Mammalian Gene Collection (MGC) project"/>
        </authorList>
    </citation>
    <scope>NUCLEOTIDE SEQUENCE [LARGE SCALE MRNA]</scope>
    <source>
        <strain>Crossbred X Angus</strain>
        <tissue>Ileum</tissue>
    </source>
</reference>
<reference key="3">
    <citation type="journal article" date="2001" name="Science">
        <title>Crystal structure of Arp2/3 complex.</title>
        <authorList>
            <person name="Robinson R.C."/>
            <person name="Turbedsky K."/>
            <person name="Kaiser D.A."/>
            <person name="Marchand J.-B."/>
            <person name="Higgs H.N."/>
            <person name="Choe S."/>
            <person name="Pollard T.D."/>
        </authorList>
    </citation>
    <scope>X-RAY CRYSTALLOGRAPHY (2.0 ANGSTROMS) OF THE ARP2/3 COMPLEX</scope>
</reference>
<reference key="4">
    <citation type="journal article" date="2004" name="Proc. Natl. Acad. Sci. U.S.A.">
        <title>Crystal structures of actin-related protein 2/3 complex with bound ATP or ADP.</title>
        <authorList>
            <person name="Nolen B.J."/>
            <person name="Littlefield R.S."/>
            <person name="Pollard T.D."/>
        </authorList>
    </citation>
    <scope>X-RAY CRYSTALLOGRAPHY (2.55 ANGSTROMS) OF THE ARP2/3 COMPLEX WITH BOUND ATP</scope>
</reference>
<name>ARC1B_BOVIN</name>
<organism>
    <name type="scientific">Bos taurus</name>
    <name type="common">Bovine</name>
    <dbReference type="NCBI Taxonomy" id="9913"/>
    <lineage>
        <taxon>Eukaryota</taxon>
        <taxon>Metazoa</taxon>
        <taxon>Chordata</taxon>
        <taxon>Craniata</taxon>
        <taxon>Vertebrata</taxon>
        <taxon>Euteleostomi</taxon>
        <taxon>Mammalia</taxon>
        <taxon>Eutheria</taxon>
        <taxon>Laurasiatheria</taxon>
        <taxon>Artiodactyla</taxon>
        <taxon>Ruminantia</taxon>
        <taxon>Pecora</taxon>
        <taxon>Bovidae</taxon>
        <taxon>Bovinae</taxon>
        <taxon>Bos</taxon>
    </lineage>
</organism>